<organism>
    <name type="scientific">Nicotiana tabacum</name>
    <name type="common">Common tobacco</name>
    <dbReference type="NCBI Taxonomy" id="4097"/>
    <lineage>
        <taxon>Eukaryota</taxon>
        <taxon>Viridiplantae</taxon>
        <taxon>Streptophyta</taxon>
        <taxon>Embryophyta</taxon>
        <taxon>Tracheophyta</taxon>
        <taxon>Spermatophyta</taxon>
        <taxon>Magnoliopsida</taxon>
        <taxon>eudicotyledons</taxon>
        <taxon>Gunneridae</taxon>
        <taxon>Pentapetalae</taxon>
        <taxon>asterids</taxon>
        <taxon>lamiids</taxon>
        <taxon>Solanales</taxon>
        <taxon>Solanaceae</taxon>
        <taxon>Nicotianoideae</taxon>
        <taxon>Nicotianeae</taxon>
        <taxon>Nicotiana</taxon>
    </lineage>
</organism>
<reference key="1">
    <citation type="journal article" date="1986" name="EMBO J.">
        <title>The complete nucleotide sequence of the tobacco chloroplast genome: its gene organization and expression.</title>
        <authorList>
            <person name="Shinozaki K."/>
            <person name="Ohme M."/>
            <person name="Tanaka M."/>
            <person name="Wakasugi T."/>
            <person name="Hayashida N."/>
            <person name="Matsubayashi T."/>
            <person name="Zaita N."/>
            <person name="Chunwongse J."/>
            <person name="Obokata J."/>
            <person name="Yamaguchi-Shinozaki K."/>
            <person name="Ohto C."/>
            <person name="Torazawa K."/>
            <person name="Meng B.-Y."/>
            <person name="Sugita M."/>
            <person name="Deno H."/>
            <person name="Kamogashira T."/>
            <person name="Yamada K."/>
            <person name="Kusuda J."/>
            <person name="Takaiwa F."/>
            <person name="Kato A."/>
            <person name="Tohdoh N."/>
            <person name="Shimada H."/>
            <person name="Sugiura M."/>
        </authorList>
    </citation>
    <scope>NUCLEOTIDE SEQUENCE [LARGE SCALE GENOMIC DNA]</scope>
    <source>
        <strain>cv. Bright Yellow 4</strain>
    </source>
</reference>
<reference key="2">
    <citation type="submission" date="2005-09" db="EMBL/GenBank/DDBJ databases">
        <authorList>
            <person name="Yukawa M."/>
        </authorList>
    </citation>
    <scope>SEQUENCE REVISION</scope>
</reference>
<name>PSAA_TOBAC</name>
<accession>P06405</accession>
<proteinExistence type="inferred from homology"/>
<dbReference type="EC" id="1.97.1.12" evidence="1"/>
<dbReference type="EMBL" id="Z00044">
    <property type="protein sequence ID" value="CAA77352.2"/>
    <property type="molecule type" value="Genomic_DNA"/>
</dbReference>
<dbReference type="PIR" id="A03464">
    <property type="entry name" value="A1NTP7"/>
</dbReference>
<dbReference type="RefSeq" id="NP_054497.2">
    <property type="nucleotide sequence ID" value="NC_001879.2"/>
</dbReference>
<dbReference type="SMR" id="P06405"/>
<dbReference type="GeneID" id="800453"/>
<dbReference type="KEGG" id="nta:800453"/>
<dbReference type="OMA" id="TWAFFHA"/>
<dbReference type="OrthoDB" id="1252832at2759"/>
<dbReference type="Proteomes" id="UP000084051">
    <property type="component" value="Unplaced"/>
</dbReference>
<dbReference type="GO" id="GO:0009535">
    <property type="term" value="C:chloroplast thylakoid membrane"/>
    <property type="evidence" value="ECO:0007669"/>
    <property type="project" value="UniProtKB-SubCell"/>
</dbReference>
<dbReference type="GO" id="GO:0009522">
    <property type="term" value="C:photosystem I"/>
    <property type="evidence" value="ECO:0007669"/>
    <property type="project" value="UniProtKB-KW"/>
</dbReference>
<dbReference type="GO" id="GO:0051539">
    <property type="term" value="F:4 iron, 4 sulfur cluster binding"/>
    <property type="evidence" value="ECO:0007669"/>
    <property type="project" value="UniProtKB-KW"/>
</dbReference>
<dbReference type="GO" id="GO:0016168">
    <property type="term" value="F:chlorophyll binding"/>
    <property type="evidence" value="ECO:0007669"/>
    <property type="project" value="UniProtKB-KW"/>
</dbReference>
<dbReference type="GO" id="GO:0009055">
    <property type="term" value="F:electron transfer activity"/>
    <property type="evidence" value="ECO:0007669"/>
    <property type="project" value="UniProtKB-UniRule"/>
</dbReference>
<dbReference type="GO" id="GO:0000287">
    <property type="term" value="F:magnesium ion binding"/>
    <property type="evidence" value="ECO:0007669"/>
    <property type="project" value="UniProtKB-UniRule"/>
</dbReference>
<dbReference type="GO" id="GO:0016491">
    <property type="term" value="F:oxidoreductase activity"/>
    <property type="evidence" value="ECO:0007669"/>
    <property type="project" value="UniProtKB-KW"/>
</dbReference>
<dbReference type="GO" id="GO:0015979">
    <property type="term" value="P:photosynthesis"/>
    <property type="evidence" value="ECO:0007669"/>
    <property type="project" value="UniProtKB-UniRule"/>
</dbReference>
<dbReference type="FunFam" id="1.20.1130.10:FF:000001">
    <property type="entry name" value="Photosystem I P700 chlorophyll a apoprotein A2"/>
    <property type="match status" value="1"/>
</dbReference>
<dbReference type="Gene3D" id="1.20.1130.10">
    <property type="entry name" value="Photosystem I PsaA/PsaB"/>
    <property type="match status" value="1"/>
</dbReference>
<dbReference type="HAMAP" id="MF_00458">
    <property type="entry name" value="PSI_PsaA"/>
    <property type="match status" value="1"/>
</dbReference>
<dbReference type="InterPro" id="IPR006243">
    <property type="entry name" value="PSI_PsaA"/>
</dbReference>
<dbReference type="InterPro" id="IPR001280">
    <property type="entry name" value="PSI_PsaA/B"/>
</dbReference>
<dbReference type="InterPro" id="IPR020586">
    <property type="entry name" value="PSI_PsaA/B_CS"/>
</dbReference>
<dbReference type="InterPro" id="IPR036408">
    <property type="entry name" value="PSI_PsaA/B_sf"/>
</dbReference>
<dbReference type="NCBIfam" id="TIGR01335">
    <property type="entry name" value="psaA"/>
    <property type="match status" value="1"/>
</dbReference>
<dbReference type="PANTHER" id="PTHR30128">
    <property type="entry name" value="OUTER MEMBRANE PROTEIN, OMPA-RELATED"/>
    <property type="match status" value="1"/>
</dbReference>
<dbReference type="PANTHER" id="PTHR30128:SF19">
    <property type="entry name" value="PHOTOSYSTEM I P700 CHLOROPHYLL A APOPROTEIN A1-RELATED"/>
    <property type="match status" value="1"/>
</dbReference>
<dbReference type="Pfam" id="PF00223">
    <property type="entry name" value="PsaA_PsaB"/>
    <property type="match status" value="1"/>
</dbReference>
<dbReference type="PIRSF" id="PIRSF002905">
    <property type="entry name" value="PSI_A"/>
    <property type="match status" value="1"/>
</dbReference>
<dbReference type="PRINTS" id="PR00257">
    <property type="entry name" value="PHOTSYSPSAAB"/>
</dbReference>
<dbReference type="SUPFAM" id="SSF81558">
    <property type="entry name" value="Photosystem I subunits PsaA/PsaB"/>
    <property type="match status" value="1"/>
</dbReference>
<dbReference type="PROSITE" id="PS00419">
    <property type="entry name" value="PHOTOSYSTEM_I_PSAAB"/>
    <property type="match status" value="1"/>
</dbReference>
<geneLocation type="chloroplast"/>
<sequence>MIIRSPEPEVKILVDRDPVKTSFEEWARPGHFSRTIAKGPDTTTWIWNLHADAHDFDSHTSDLEEISRKVFSAHFGQLSIIFLWLSGMYFHGARFSNYEAWLSDPTHIGPSAQVVWPIVGQEILNGDVGGGFRGIQITSGFFQIWRASGITSELQLYCTAIGALVFAALMLFAGWFHYHKAAPKLAWFQDVESMLNHHLAGLLGLGSLSWAGHQVHVSLPINQFLNAGVDPKEIPLPHEFILNRDLLAQLYPSFAEGATPFFTLNWSKYADFLTFRGGLDPVTGGLWLTDIAHHHLAIAILFLIAGHMYRTNWGIGHGLKDILEAHKGPFTGQGHKGLYEILTTSWHAQLSLNLAMLGSLTIVVAHHMYSMPPYPYLATDYGTQLSLFTHHMWIGGFLIVGAAAHAAIFMVRDYDPTTRYNDLLDRVLRHRDAIISHLNWACIFLGFHSFGLYIHNDTMSALGRPQDMFSDTAIQLQPVFAQWIQNTHALAPGATAPGATASTSLTWGGGDLVAVGGKVALLPIPLGTADFLVHHIHAFTIHVTVLILLKGVLFARSSRLIPDKANLGFRFPCDGPGRGGTCQVSAWDHVFLGLFWMYNAISVVIFHFSWKMQSDVWGSVSDQGVVTHITGGNFAQSSITINGWLRDFLWAQASQVIQSYGSSLSAYGLFFLGAHFVWAFSLMFLFSGRGYWQELIESIVWAHNKLKVAPATQPRALSIIQGRAVGVTHYLLGGIATTWAFFLARIIAVG</sequence>
<protein>
    <recommendedName>
        <fullName evidence="1">Photosystem I P700 chlorophyll a apoprotein A1</fullName>
        <ecNumber evidence="1">1.97.1.12</ecNumber>
    </recommendedName>
    <alternativeName>
        <fullName evidence="1">PSI-A</fullName>
    </alternativeName>
    <alternativeName>
        <fullName evidence="1">PsaA</fullName>
    </alternativeName>
</protein>
<evidence type="ECO:0000255" key="1">
    <source>
        <dbReference type="HAMAP-Rule" id="MF_00458"/>
    </source>
</evidence>
<comment type="function">
    <text>PsaA and PsaB bind P700, the primary electron donor of photosystem I (PSI), as well as the electron acceptors A0, A1 and FX. PSI is a plastocyanin-ferredoxin oxidoreductase, converting photonic excitation into a charge separation, which transfers an electron from the donor P700 chlorophyll pair to the spectroscopically characterized acceptors A0, A1, FX, FA and FB in turn. Oxidized P700 is reduced on the lumenal side of the thylakoid membrane by plastocyanin.</text>
</comment>
<comment type="catalytic activity">
    <reaction evidence="1">
        <text>reduced [plastocyanin] + hnu + oxidized [2Fe-2S]-[ferredoxin] = oxidized [plastocyanin] + reduced [2Fe-2S]-[ferredoxin]</text>
        <dbReference type="Rhea" id="RHEA:30407"/>
        <dbReference type="Rhea" id="RHEA-COMP:10000"/>
        <dbReference type="Rhea" id="RHEA-COMP:10001"/>
        <dbReference type="Rhea" id="RHEA-COMP:10039"/>
        <dbReference type="Rhea" id="RHEA-COMP:10040"/>
        <dbReference type="ChEBI" id="CHEBI:29036"/>
        <dbReference type="ChEBI" id="CHEBI:30212"/>
        <dbReference type="ChEBI" id="CHEBI:33737"/>
        <dbReference type="ChEBI" id="CHEBI:33738"/>
        <dbReference type="ChEBI" id="CHEBI:49552"/>
        <dbReference type="EC" id="1.97.1.12"/>
    </reaction>
</comment>
<comment type="cofactor">
    <text evidence="1">P700 is a chlorophyll a/chlorophyll a' dimer, A0 is one or more chlorophyll a, A1 is one or both phylloquinones and FX is a shared 4Fe-4S iron-sulfur center.</text>
</comment>
<comment type="subunit">
    <text evidence="1">The PsaA/B heterodimer binds the P700 chlorophyll special pair and subsequent electron acceptors. PSI consists of a core antenna complex that captures photons, and an electron transfer chain that converts photonic excitation into a charge separation. The eukaryotic PSI reaction center is composed of at least 11 subunits.</text>
</comment>
<comment type="subcellular location">
    <subcellularLocation>
        <location evidence="1">Plastid</location>
        <location evidence="1">Chloroplast thylakoid membrane</location>
        <topology evidence="1">Multi-pass membrane protein</topology>
    </subcellularLocation>
</comment>
<comment type="similarity">
    <text evidence="1">Belongs to the PsaA/PsaB family.</text>
</comment>
<feature type="chain" id="PRO_0000088579" description="Photosystem I P700 chlorophyll a apoprotein A1">
    <location>
        <begin position="1"/>
        <end position="750"/>
    </location>
</feature>
<feature type="transmembrane region" description="Helical; Name=I" evidence="1">
    <location>
        <begin position="70"/>
        <end position="93"/>
    </location>
</feature>
<feature type="transmembrane region" description="Helical; Name=II" evidence="1">
    <location>
        <begin position="156"/>
        <end position="179"/>
    </location>
</feature>
<feature type="transmembrane region" description="Helical; Name=III" evidence="1">
    <location>
        <begin position="195"/>
        <end position="219"/>
    </location>
</feature>
<feature type="transmembrane region" description="Helical; Name=IV" evidence="1">
    <location>
        <begin position="291"/>
        <end position="309"/>
    </location>
</feature>
<feature type="transmembrane region" description="Helical; Name=V" evidence="1">
    <location>
        <begin position="346"/>
        <end position="369"/>
    </location>
</feature>
<feature type="transmembrane region" description="Helical; Name=VI" evidence="1">
    <location>
        <begin position="385"/>
        <end position="411"/>
    </location>
</feature>
<feature type="transmembrane region" description="Helical; Name=VII" evidence="1">
    <location>
        <begin position="433"/>
        <end position="455"/>
    </location>
</feature>
<feature type="transmembrane region" description="Helical; Name=VIII" evidence="1">
    <location>
        <begin position="531"/>
        <end position="549"/>
    </location>
</feature>
<feature type="transmembrane region" description="Helical; Name=IX" evidence="1">
    <location>
        <begin position="589"/>
        <end position="610"/>
    </location>
</feature>
<feature type="transmembrane region" description="Helical; Name=X" evidence="1">
    <location>
        <begin position="664"/>
        <end position="686"/>
    </location>
</feature>
<feature type="transmembrane region" description="Helical; Name=XI" evidence="1">
    <location>
        <begin position="724"/>
        <end position="744"/>
    </location>
</feature>
<feature type="binding site" evidence="1">
    <location>
        <position position="573"/>
    </location>
    <ligand>
        <name>[4Fe-4S] cluster</name>
        <dbReference type="ChEBI" id="CHEBI:49883"/>
        <note>ligand shared between dimeric partners</note>
    </ligand>
</feature>
<feature type="binding site" evidence="1">
    <location>
        <position position="582"/>
    </location>
    <ligand>
        <name>[4Fe-4S] cluster</name>
        <dbReference type="ChEBI" id="CHEBI:49883"/>
        <note>ligand shared between dimeric partners</note>
    </ligand>
</feature>
<feature type="binding site" description="axial binding residue" evidence="1">
    <location>
        <position position="675"/>
    </location>
    <ligand>
        <name>chlorophyll a'</name>
        <dbReference type="ChEBI" id="CHEBI:189419"/>
        <label>A1</label>
    </ligand>
    <ligandPart>
        <name>Mg</name>
        <dbReference type="ChEBI" id="CHEBI:25107"/>
    </ligandPart>
</feature>
<feature type="binding site" description="axial binding residue" evidence="1">
    <location>
        <position position="683"/>
    </location>
    <ligand>
        <name>chlorophyll a</name>
        <dbReference type="ChEBI" id="CHEBI:58416"/>
        <label>A3</label>
    </ligand>
    <ligandPart>
        <name>Mg</name>
        <dbReference type="ChEBI" id="CHEBI:25107"/>
    </ligandPart>
</feature>
<feature type="binding site" evidence="1">
    <location>
        <position position="691"/>
    </location>
    <ligand>
        <name>chlorophyll a</name>
        <dbReference type="ChEBI" id="CHEBI:58416"/>
        <label>A3</label>
    </ligand>
</feature>
<feature type="binding site" evidence="1">
    <location>
        <position position="692"/>
    </location>
    <ligand>
        <name>phylloquinone</name>
        <dbReference type="ChEBI" id="CHEBI:18067"/>
        <label>A</label>
    </ligand>
</feature>
<gene>
    <name evidence="1" type="primary">psaA</name>
</gene>
<keyword id="KW-0004">4Fe-4S</keyword>
<keyword id="KW-0148">Chlorophyll</keyword>
<keyword id="KW-0150">Chloroplast</keyword>
<keyword id="KW-0157">Chromophore</keyword>
<keyword id="KW-0249">Electron transport</keyword>
<keyword id="KW-0408">Iron</keyword>
<keyword id="KW-0411">Iron-sulfur</keyword>
<keyword id="KW-0460">Magnesium</keyword>
<keyword id="KW-0472">Membrane</keyword>
<keyword id="KW-0479">Metal-binding</keyword>
<keyword id="KW-0560">Oxidoreductase</keyword>
<keyword id="KW-0602">Photosynthesis</keyword>
<keyword id="KW-0603">Photosystem I</keyword>
<keyword id="KW-0934">Plastid</keyword>
<keyword id="KW-1185">Reference proteome</keyword>
<keyword id="KW-0793">Thylakoid</keyword>
<keyword id="KW-0812">Transmembrane</keyword>
<keyword id="KW-1133">Transmembrane helix</keyword>
<keyword id="KW-0813">Transport</keyword>